<comment type="function">
    <text evidence="1">Catalyzes the conversion of D-ribulose 5-phosphate to formate and 3,4-dihydroxy-2-butanone 4-phosphate.</text>
</comment>
<comment type="catalytic activity">
    <reaction evidence="1">
        <text>D-ribulose 5-phosphate = (2S)-2-hydroxy-3-oxobutyl phosphate + formate + H(+)</text>
        <dbReference type="Rhea" id="RHEA:18457"/>
        <dbReference type="ChEBI" id="CHEBI:15378"/>
        <dbReference type="ChEBI" id="CHEBI:15740"/>
        <dbReference type="ChEBI" id="CHEBI:58121"/>
        <dbReference type="ChEBI" id="CHEBI:58830"/>
        <dbReference type="EC" id="4.1.99.12"/>
    </reaction>
</comment>
<comment type="cofactor">
    <cofactor evidence="1">
        <name>Mg(2+)</name>
        <dbReference type="ChEBI" id="CHEBI:18420"/>
    </cofactor>
    <cofactor evidence="1">
        <name>Mn(2+)</name>
        <dbReference type="ChEBI" id="CHEBI:29035"/>
    </cofactor>
    <text evidence="1">Binds 2 divalent metal cations per subunit. Magnesium or manganese.</text>
</comment>
<comment type="pathway">
    <text evidence="1">Cofactor biosynthesis; riboflavin biosynthesis; 2-hydroxy-3-oxobutyl phosphate from D-ribulose 5-phosphate: step 1/1.</text>
</comment>
<comment type="subunit">
    <text evidence="1">Homodimer.</text>
</comment>
<comment type="similarity">
    <text evidence="1">Belongs to the DHBP synthase family.</text>
</comment>
<sequence length="217" mass="22943">MNQSLLAPFGTAIERVEAGLNALRQGQGVLVVDDEDRENEGDLIFAAQTLTNAQMAMLIRECSGIVCLCLPDEKVKALELPPMVENNSSQYGTAFTVSIEAKVGVTTGVSAADRVTTIKAAIADGAKPSDLARPGHVYPLRAQPGGVLTRRGHTEGTIDLMQLAGLKPAGVLCEVTNPDGTMARLPEIIAFGAQHNIPVLTIEDIVLYRKSLLANVG</sequence>
<evidence type="ECO:0000255" key="1">
    <source>
        <dbReference type="HAMAP-Rule" id="MF_00180"/>
    </source>
</evidence>
<keyword id="KW-0456">Lyase</keyword>
<keyword id="KW-0460">Magnesium</keyword>
<keyword id="KW-0464">Manganese</keyword>
<keyword id="KW-0479">Metal-binding</keyword>
<keyword id="KW-0686">Riboflavin biosynthesis</keyword>
<protein>
    <recommendedName>
        <fullName evidence="1">3,4-dihydroxy-2-butanone 4-phosphate synthase</fullName>
        <shortName evidence="1">DHBP synthase</shortName>
        <ecNumber evidence="1">4.1.99.12</ecNumber>
    </recommendedName>
</protein>
<dbReference type="EC" id="4.1.99.12" evidence="1"/>
<dbReference type="EMBL" id="CP000503">
    <property type="protein sequence ID" value="ABM26742.1"/>
    <property type="molecule type" value="Genomic_DNA"/>
</dbReference>
<dbReference type="RefSeq" id="WP_011791164.1">
    <property type="nucleotide sequence ID" value="NC_008750.1"/>
</dbReference>
<dbReference type="SMR" id="A1RPZ7"/>
<dbReference type="KEGG" id="shw:Sputw3181_3938"/>
<dbReference type="HOGENOM" id="CLU_020273_3_0_6"/>
<dbReference type="UniPathway" id="UPA00275">
    <property type="reaction ID" value="UER00399"/>
</dbReference>
<dbReference type="Proteomes" id="UP000002597">
    <property type="component" value="Chromosome"/>
</dbReference>
<dbReference type="GO" id="GO:0005829">
    <property type="term" value="C:cytosol"/>
    <property type="evidence" value="ECO:0007669"/>
    <property type="project" value="TreeGrafter"/>
</dbReference>
<dbReference type="GO" id="GO:0008686">
    <property type="term" value="F:3,4-dihydroxy-2-butanone-4-phosphate synthase activity"/>
    <property type="evidence" value="ECO:0007669"/>
    <property type="project" value="UniProtKB-UniRule"/>
</dbReference>
<dbReference type="GO" id="GO:0000287">
    <property type="term" value="F:magnesium ion binding"/>
    <property type="evidence" value="ECO:0007669"/>
    <property type="project" value="UniProtKB-UniRule"/>
</dbReference>
<dbReference type="GO" id="GO:0030145">
    <property type="term" value="F:manganese ion binding"/>
    <property type="evidence" value="ECO:0007669"/>
    <property type="project" value="UniProtKB-UniRule"/>
</dbReference>
<dbReference type="GO" id="GO:0009231">
    <property type="term" value="P:riboflavin biosynthetic process"/>
    <property type="evidence" value="ECO:0007669"/>
    <property type="project" value="UniProtKB-UniRule"/>
</dbReference>
<dbReference type="FunFam" id="3.90.870.10:FF:000002">
    <property type="entry name" value="3,4-dihydroxy-2-butanone 4-phosphate synthase"/>
    <property type="match status" value="1"/>
</dbReference>
<dbReference type="Gene3D" id="3.90.870.10">
    <property type="entry name" value="DHBP synthase"/>
    <property type="match status" value="1"/>
</dbReference>
<dbReference type="HAMAP" id="MF_00180">
    <property type="entry name" value="RibB"/>
    <property type="match status" value="1"/>
</dbReference>
<dbReference type="InterPro" id="IPR017945">
    <property type="entry name" value="DHBP_synth_RibB-like_a/b_dom"/>
</dbReference>
<dbReference type="InterPro" id="IPR000422">
    <property type="entry name" value="DHBP_synthase_RibB"/>
</dbReference>
<dbReference type="NCBIfam" id="TIGR00506">
    <property type="entry name" value="ribB"/>
    <property type="match status" value="1"/>
</dbReference>
<dbReference type="PANTHER" id="PTHR21327:SF38">
    <property type="entry name" value="3,4-DIHYDROXY-2-BUTANONE 4-PHOSPHATE SYNTHASE"/>
    <property type="match status" value="1"/>
</dbReference>
<dbReference type="PANTHER" id="PTHR21327">
    <property type="entry name" value="GTP CYCLOHYDROLASE II-RELATED"/>
    <property type="match status" value="1"/>
</dbReference>
<dbReference type="Pfam" id="PF00926">
    <property type="entry name" value="DHBP_synthase"/>
    <property type="match status" value="1"/>
</dbReference>
<dbReference type="SUPFAM" id="SSF55821">
    <property type="entry name" value="YrdC/RibB"/>
    <property type="match status" value="1"/>
</dbReference>
<organism>
    <name type="scientific">Shewanella sp. (strain W3-18-1)</name>
    <dbReference type="NCBI Taxonomy" id="351745"/>
    <lineage>
        <taxon>Bacteria</taxon>
        <taxon>Pseudomonadati</taxon>
        <taxon>Pseudomonadota</taxon>
        <taxon>Gammaproteobacteria</taxon>
        <taxon>Alteromonadales</taxon>
        <taxon>Shewanellaceae</taxon>
        <taxon>Shewanella</taxon>
    </lineage>
</organism>
<accession>A1RPZ7</accession>
<proteinExistence type="inferred from homology"/>
<gene>
    <name evidence="1" type="primary">ribB</name>
    <name type="ordered locus">Sputw3181_3938</name>
</gene>
<name>RIBB_SHESW</name>
<feature type="chain" id="PRO_1000040633" description="3,4-dihydroxy-2-butanone 4-phosphate synthase">
    <location>
        <begin position="1"/>
        <end position="217"/>
    </location>
</feature>
<feature type="binding site" evidence="1">
    <location>
        <begin position="37"/>
        <end position="38"/>
    </location>
    <ligand>
        <name>D-ribulose 5-phosphate</name>
        <dbReference type="ChEBI" id="CHEBI:58121"/>
    </ligand>
</feature>
<feature type="binding site" evidence="1">
    <location>
        <position position="38"/>
    </location>
    <ligand>
        <name>Mg(2+)</name>
        <dbReference type="ChEBI" id="CHEBI:18420"/>
        <label>1</label>
    </ligand>
</feature>
<feature type="binding site" evidence="1">
    <location>
        <position position="38"/>
    </location>
    <ligand>
        <name>Mg(2+)</name>
        <dbReference type="ChEBI" id="CHEBI:18420"/>
        <label>2</label>
    </ligand>
</feature>
<feature type="binding site" evidence="1">
    <location>
        <position position="42"/>
    </location>
    <ligand>
        <name>D-ribulose 5-phosphate</name>
        <dbReference type="ChEBI" id="CHEBI:58121"/>
    </ligand>
</feature>
<feature type="binding site" evidence="1">
    <location>
        <begin position="150"/>
        <end position="154"/>
    </location>
    <ligand>
        <name>D-ribulose 5-phosphate</name>
        <dbReference type="ChEBI" id="CHEBI:58121"/>
    </ligand>
</feature>
<feature type="binding site" evidence="1">
    <location>
        <position position="153"/>
    </location>
    <ligand>
        <name>Mg(2+)</name>
        <dbReference type="ChEBI" id="CHEBI:18420"/>
        <label>2</label>
    </ligand>
</feature>
<feature type="binding site" evidence="1">
    <location>
        <position position="174"/>
    </location>
    <ligand>
        <name>D-ribulose 5-phosphate</name>
        <dbReference type="ChEBI" id="CHEBI:58121"/>
    </ligand>
</feature>
<feature type="site" description="Essential for catalytic activity" evidence="1">
    <location>
        <position position="136"/>
    </location>
</feature>
<feature type="site" description="Essential for catalytic activity" evidence="1">
    <location>
        <position position="174"/>
    </location>
</feature>
<reference key="1">
    <citation type="submission" date="2006-12" db="EMBL/GenBank/DDBJ databases">
        <title>Complete sequence of Shewanella sp. W3-18-1.</title>
        <authorList>
            <consortium name="US DOE Joint Genome Institute"/>
            <person name="Copeland A."/>
            <person name="Lucas S."/>
            <person name="Lapidus A."/>
            <person name="Barry K."/>
            <person name="Detter J.C."/>
            <person name="Glavina del Rio T."/>
            <person name="Hammon N."/>
            <person name="Israni S."/>
            <person name="Dalin E."/>
            <person name="Tice H."/>
            <person name="Pitluck S."/>
            <person name="Chain P."/>
            <person name="Malfatti S."/>
            <person name="Shin M."/>
            <person name="Vergez L."/>
            <person name="Schmutz J."/>
            <person name="Larimer F."/>
            <person name="Land M."/>
            <person name="Hauser L."/>
            <person name="Kyrpides N."/>
            <person name="Lykidis A."/>
            <person name="Tiedje J."/>
            <person name="Richardson P."/>
        </authorList>
    </citation>
    <scope>NUCLEOTIDE SEQUENCE [LARGE SCALE GENOMIC DNA]</scope>
    <source>
        <strain>W3-18-1</strain>
    </source>
</reference>